<proteinExistence type="inferred from homology"/>
<comment type="function">
    <text evidence="1">Core subunit of the mitochondrial membrane respiratory chain NADH dehydrogenase (Complex I) which catalyzes electron transfer from NADH through the respiratory chain, using ubiquinone as an electron acceptor. Essential for the catalytic activity and assembly of complex I.</text>
</comment>
<comment type="catalytic activity">
    <reaction evidence="1">
        <text>a ubiquinone + NADH + 5 H(+)(in) = a ubiquinol + NAD(+) + 4 H(+)(out)</text>
        <dbReference type="Rhea" id="RHEA:29091"/>
        <dbReference type="Rhea" id="RHEA-COMP:9565"/>
        <dbReference type="Rhea" id="RHEA-COMP:9566"/>
        <dbReference type="ChEBI" id="CHEBI:15378"/>
        <dbReference type="ChEBI" id="CHEBI:16389"/>
        <dbReference type="ChEBI" id="CHEBI:17976"/>
        <dbReference type="ChEBI" id="CHEBI:57540"/>
        <dbReference type="ChEBI" id="CHEBI:57945"/>
        <dbReference type="EC" id="7.1.1.2"/>
    </reaction>
</comment>
<comment type="subunit">
    <text evidence="2">Core subunit of respiratory chain NADH dehydrogenase (Complex I) which is composed of 45 different subunits.</text>
</comment>
<comment type="subcellular location">
    <subcellularLocation>
        <location evidence="2">Mitochondrion inner membrane</location>
        <topology evidence="3">Multi-pass membrane protein</topology>
    </subcellularLocation>
</comment>
<comment type="similarity">
    <text evidence="4">Belongs to the complex I subunit 6 family.</text>
</comment>
<sequence>MTYVVFLLSVMFVMGFVGFSSKPSPIYGGLGLIVSGGVGCGIVLSFGGSFLGLMMFLIYLGGMLVVFGYTTAMATEEYPETWGSNVMILGMFVLGVLMEVGLVVYMVMSDGVEIVVDFKNMGDWVVFEGDEVGLIREDSMGVAALYSYGSWLMVVAGWSLFVSIFIVIEITRGA</sequence>
<dbReference type="EC" id="7.1.1.2" evidence="1"/>
<dbReference type="EMBL" id="AJ001588">
    <property type="protein sequence ID" value="CAA04858.1"/>
    <property type="molecule type" value="Genomic_DNA"/>
</dbReference>
<dbReference type="PIR" id="T11491">
    <property type="entry name" value="T11491"/>
</dbReference>
<dbReference type="RefSeq" id="NP_007560.1">
    <property type="nucleotide sequence ID" value="NC_001913.1"/>
</dbReference>
<dbReference type="SMR" id="O79438"/>
<dbReference type="FunCoup" id="O79438">
    <property type="interactions" value="78"/>
</dbReference>
<dbReference type="STRING" id="9986.ENSOCUP00000026190"/>
<dbReference type="PaxDb" id="9986-ENSOCUP00000026190"/>
<dbReference type="Ensembl" id="ENSOCUT00000033138.1">
    <property type="protein sequence ID" value="ENSOCUP00000026190.1"/>
    <property type="gene ID" value="ENSOCUG00000029113.1"/>
</dbReference>
<dbReference type="GeneID" id="808223"/>
<dbReference type="KEGG" id="ocu:808223"/>
<dbReference type="CTD" id="4541"/>
<dbReference type="eggNOG" id="ENOG502S2Q2">
    <property type="taxonomic scope" value="Eukaryota"/>
</dbReference>
<dbReference type="GeneTree" id="ENSGT00390000003988"/>
<dbReference type="HOGENOM" id="CLU_129718_0_0_1"/>
<dbReference type="InParanoid" id="O79438"/>
<dbReference type="OMA" id="WVIYDTG"/>
<dbReference type="OrthoDB" id="9837654at2759"/>
<dbReference type="TreeFam" id="TF343324"/>
<dbReference type="Proteomes" id="UP000001811">
    <property type="component" value="Mitochondrion"/>
</dbReference>
<dbReference type="Bgee" id="ENSOCUG00000029113">
    <property type="expression patterns" value="Expressed in prefrontal cortex and 15 other cell types or tissues"/>
</dbReference>
<dbReference type="ExpressionAtlas" id="O79438">
    <property type="expression patterns" value="baseline"/>
</dbReference>
<dbReference type="GO" id="GO:0005743">
    <property type="term" value="C:mitochondrial inner membrane"/>
    <property type="evidence" value="ECO:0000250"/>
    <property type="project" value="UniProtKB"/>
</dbReference>
<dbReference type="GO" id="GO:0045271">
    <property type="term" value="C:respiratory chain complex I"/>
    <property type="evidence" value="ECO:0007669"/>
    <property type="project" value="Ensembl"/>
</dbReference>
<dbReference type="GO" id="GO:0008137">
    <property type="term" value="F:NADH dehydrogenase (ubiquinone) activity"/>
    <property type="evidence" value="ECO:0000250"/>
    <property type="project" value="UniProtKB"/>
</dbReference>
<dbReference type="GO" id="GO:0006120">
    <property type="term" value="P:mitochondrial electron transport, NADH to ubiquinone"/>
    <property type="evidence" value="ECO:0000250"/>
    <property type="project" value="UniProtKB"/>
</dbReference>
<dbReference type="GO" id="GO:0032981">
    <property type="term" value="P:mitochondrial respiratory chain complex I assembly"/>
    <property type="evidence" value="ECO:0000250"/>
    <property type="project" value="UniProtKB"/>
</dbReference>
<dbReference type="Gene3D" id="1.20.120.1200">
    <property type="entry name" value="NADH-ubiquinone/plastoquinone oxidoreductase chain 6, subunit NuoJ"/>
    <property type="match status" value="1"/>
</dbReference>
<dbReference type="InterPro" id="IPR050269">
    <property type="entry name" value="ComplexI_Subunit6"/>
</dbReference>
<dbReference type="InterPro" id="IPR001457">
    <property type="entry name" value="NADH_UbQ/plastoQ_OxRdtase_su6"/>
</dbReference>
<dbReference type="InterPro" id="IPR042106">
    <property type="entry name" value="Nuo/plastoQ_OxRdtase_6_NuoJ"/>
</dbReference>
<dbReference type="PANTHER" id="PTHR11435">
    <property type="entry name" value="NADH UBIQUINONE OXIDOREDUCTASE SUBUNIT ND6"/>
    <property type="match status" value="1"/>
</dbReference>
<dbReference type="PANTHER" id="PTHR11435:SF1">
    <property type="entry name" value="NADH-UBIQUINONE OXIDOREDUCTASE CHAIN 6"/>
    <property type="match status" value="1"/>
</dbReference>
<dbReference type="Pfam" id="PF00499">
    <property type="entry name" value="Oxidored_q3"/>
    <property type="match status" value="1"/>
</dbReference>
<feature type="chain" id="PRO_0000118325" description="NADH-ubiquinone oxidoreductase chain 6">
    <location>
        <begin position="1"/>
        <end position="174"/>
    </location>
</feature>
<feature type="transmembrane region" description="Helical" evidence="3">
    <location>
        <begin position="1"/>
        <end position="21"/>
    </location>
</feature>
<feature type="transmembrane region" description="Helical" evidence="3">
    <location>
        <begin position="24"/>
        <end position="44"/>
    </location>
</feature>
<feature type="transmembrane region" description="Helical" evidence="3">
    <location>
        <begin position="46"/>
        <end position="66"/>
    </location>
</feature>
<feature type="transmembrane region" description="Helical" evidence="3">
    <location>
        <begin position="86"/>
        <end position="106"/>
    </location>
</feature>
<feature type="transmembrane region" description="Helical" evidence="3">
    <location>
        <begin position="151"/>
        <end position="171"/>
    </location>
</feature>
<gene>
    <name type="primary">MT-ND6</name>
    <name type="synonym">MTND6</name>
    <name type="synonym">NADH6</name>
    <name type="synonym">ND6</name>
</gene>
<geneLocation type="mitochondrion"/>
<keyword id="KW-0249">Electron transport</keyword>
<keyword id="KW-0472">Membrane</keyword>
<keyword id="KW-0496">Mitochondrion</keyword>
<keyword id="KW-0999">Mitochondrion inner membrane</keyword>
<keyword id="KW-0520">NAD</keyword>
<keyword id="KW-1185">Reference proteome</keyword>
<keyword id="KW-0679">Respiratory chain</keyword>
<keyword id="KW-1278">Translocase</keyword>
<keyword id="KW-0812">Transmembrane</keyword>
<keyword id="KW-1133">Transmembrane helix</keyword>
<keyword id="KW-0813">Transport</keyword>
<keyword id="KW-0830">Ubiquinone</keyword>
<evidence type="ECO:0000250" key="1">
    <source>
        <dbReference type="UniProtKB" id="P03923"/>
    </source>
</evidence>
<evidence type="ECO:0000250" key="2">
    <source>
        <dbReference type="UniProtKB" id="P03924"/>
    </source>
</evidence>
<evidence type="ECO:0000255" key="3"/>
<evidence type="ECO:0000305" key="4"/>
<evidence type="ECO:0000312" key="5">
    <source>
        <dbReference type="Proteomes" id="UP000001811"/>
    </source>
</evidence>
<organism>
    <name type="scientific">Oryctolagus cuniculus</name>
    <name type="common">Rabbit</name>
    <dbReference type="NCBI Taxonomy" id="9986"/>
    <lineage>
        <taxon>Eukaryota</taxon>
        <taxon>Metazoa</taxon>
        <taxon>Chordata</taxon>
        <taxon>Craniata</taxon>
        <taxon>Vertebrata</taxon>
        <taxon>Euteleostomi</taxon>
        <taxon>Mammalia</taxon>
        <taxon>Eutheria</taxon>
        <taxon>Euarchontoglires</taxon>
        <taxon>Glires</taxon>
        <taxon>Lagomorpha</taxon>
        <taxon>Leporidae</taxon>
        <taxon>Oryctolagus</taxon>
    </lineage>
</organism>
<name>NU6M_RABIT</name>
<accession>O79438</accession>
<reference key="1">
    <citation type="journal article" date="1998" name="Genomics">
        <title>The complete mitochondrial DNA sequence of the rabbit, Oryctolagus cuniculus.</title>
        <authorList>
            <person name="Gissi C."/>
            <person name="Gullberg A."/>
            <person name="Arnason U."/>
        </authorList>
    </citation>
    <scope>NUCLEOTIDE SEQUENCE [LARGE SCALE GENOMIC DNA]</scope>
    <source>
        <strain evidence="5">Thorbecke</strain>
    </source>
</reference>
<protein>
    <recommendedName>
        <fullName>NADH-ubiquinone oxidoreductase chain 6</fullName>
        <ecNumber evidence="1">7.1.1.2</ecNumber>
    </recommendedName>
    <alternativeName>
        <fullName>NADH dehydrogenase subunit 6</fullName>
    </alternativeName>
</protein>